<accession>P0A0M6</accession>
<accession>P52080</accession>
<comment type="function">
    <text evidence="1">Could catalyze the transfer of an acetyl group from acetyl coenzyme A (AcCoA) to an acceptor substrate and release both CoA and the acetylated product.</text>
</comment>
<comment type="similarity">
    <text evidence="4">Belongs to the UPF0039 (ElaA) family.</text>
</comment>
<sequence length="144" mass="16556">MFSKVNNQKMLEDCFYIRKKVFVEEQGVPEESEIDEYESESIHLIGYDNGQPVATARIRPINETTVKIERVAVMKSHRGQGMGRMLMQAVESLAKDEGFYVATMNAQCHAIPFYESLNFKMRGNIFLEEGIEHIEMTKKLTSLN</sequence>
<protein>
    <recommendedName>
        <fullName evidence="1">Putative acetyltransferase SAV1054</fullName>
        <ecNumber>2.3.1.-</ecNumber>
    </recommendedName>
    <alternativeName>
        <fullName evidence="1">GCN5-related N-acetyltransferase</fullName>
        <shortName evidence="1">GNAT</shortName>
    </alternativeName>
</protein>
<reference key="1">
    <citation type="journal article" date="2001" name="Lancet">
        <title>Whole genome sequencing of meticillin-resistant Staphylococcus aureus.</title>
        <authorList>
            <person name="Kuroda M."/>
            <person name="Ohta T."/>
            <person name="Uchiyama I."/>
            <person name="Baba T."/>
            <person name="Yuzawa H."/>
            <person name="Kobayashi I."/>
            <person name="Cui L."/>
            <person name="Oguchi A."/>
            <person name="Aoki K."/>
            <person name="Nagai Y."/>
            <person name="Lian J.-Q."/>
            <person name="Ito T."/>
            <person name="Kanamori M."/>
            <person name="Matsumaru H."/>
            <person name="Maruyama A."/>
            <person name="Murakami H."/>
            <person name="Hosoyama A."/>
            <person name="Mizutani-Ui Y."/>
            <person name="Takahashi N.K."/>
            <person name="Sawano T."/>
            <person name="Inoue R."/>
            <person name="Kaito C."/>
            <person name="Sekimizu K."/>
            <person name="Hirakawa H."/>
            <person name="Kuhara S."/>
            <person name="Goto S."/>
            <person name="Yabuzaki J."/>
            <person name="Kanehisa M."/>
            <person name="Yamashita A."/>
            <person name="Oshima K."/>
            <person name="Furuya K."/>
            <person name="Yoshino C."/>
            <person name="Shiba T."/>
            <person name="Hattori M."/>
            <person name="Ogasawara N."/>
            <person name="Hayashi H."/>
            <person name="Hiramatsu K."/>
        </authorList>
    </citation>
    <scope>NUCLEOTIDE SEQUENCE [LARGE SCALE GENOMIC DNA]</scope>
    <source>
        <strain>Mu50 / ATCC 700699</strain>
    </source>
</reference>
<name>ATSE_STAAM</name>
<dbReference type="EC" id="2.3.1.-"/>
<dbReference type="EMBL" id="BA000017">
    <property type="protein sequence ID" value="BAB57216.1"/>
    <property type="molecule type" value="Genomic_DNA"/>
</dbReference>
<dbReference type="RefSeq" id="WP_000491986.1">
    <property type="nucleotide sequence ID" value="NC_002758.2"/>
</dbReference>
<dbReference type="SMR" id="P0A0M6"/>
<dbReference type="KEGG" id="sav:SAV1054"/>
<dbReference type="HOGENOM" id="CLU_056607_6_2_9"/>
<dbReference type="PhylomeDB" id="P0A0M6"/>
<dbReference type="Proteomes" id="UP000002481">
    <property type="component" value="Chromosome"/>
</dbReference>
<dbReference type="GO" id="GO:0016747">
    <property type="term" value="F:acyltransferase activity, transferring groups other than amino-acyl groups"/>
    <property type="evidence" value="ECO:0000250"/>
    <property type="project" value="UniProtKB"/>
</dbReference>
<dbReference type="GO" id="GO:0004343">
    <property type="term" value="F:glucosamine 6-phosphate N-acetyltransferase activity"/>
    <property type="evidence" value="ECO:0007669"/>
    <property type="project" value="TreeGrafter"/>
</dbReference>
<dbReference type="CDD" id="cd04301">
    <property type="entry name" value="NAT_SF"/>
    <property type="match status" value="1"/>
</dbReference>
<dbReference type="FunFam" id="3.40.630.30:FF:000131">
    <property type="entry name" value="Acetyltransferase, GNAT family"/>
    <property type="match status" value="1"/>
</dbReference>
<dbReference type="Gene3D" id="3.40.630.30">
    <property type="match status" value="1"/>
</dbReference>
<dbReference type="InterPro" id="IPR016181">
    <property type="entry name" value="Acyl_CoA_acyltransferase"/>
</dbReference>
<dbReference type="InterPro" id="IPR000182">
    <property type="entry name" value="GNAT_dom"/>
</dbReference>
<dbReference type="InterPro" id="IPR039143">
    <property type="entry name" value="GNPNAT1-like"/>
</dbReference>
<dbReference type="PANTHER" id="PTHR13355">
    <property type="entry name" value="GLUCOSAMINE 6-PHOSPHATE N-ACETYLTRANSFERASE"/>
    <property type="match status" value="1"/>
</dbReference>
<dbReference type="PANTHER" id="PTHR13355:SF11">
    <property type="entry name" value="GLUCOSAMINE 6-PHOSPHATE N-ACETYLTRANSFERASE"/>
    <property type="match status" value="1"/>
</dbReference>
<dbReference type="Pfam" id="PF00583">
    <property type="entry name" value="Acetyltransf_1"/>
    <property type="match status" value="1"/>
</dbReference>
<dbReference type="SUPFAM" id="SSF55729">
    <property type="entry name" value="Acyl-CoA N-acyltransferases (Nat)"/>
    <property type="match status" value="1"/>
</dbReference>
<dbReference type="PROSITE" id="PS51186">
    <property type="entry name" value="GNAT"/>
    <property type="match status" value="1"/>
</dbReference>
<organism>
    <name type="scientific">Staphylococcus aureus (strain Mu50 / ATCC 700699)</name>
    <dbReference type="NCBI Taxonomy" id="158878"/>
    <lineage>
        <taxon>Bacteria</taxon>
        <taxon>Bacillati</taxon>
        <taxon>Bacillota</taxon>
        <taxon>Bacilli</taxon>
        <taxon>Bacillales</taxon>
        <taxon>Staphylococcaceae</taxon>
        <taxon>Staphylococcus</taxon>
    </lineage>
</organism>
<proteinExistence type="inferred from homology"/>
<feature type="chain" id="PRO_0000201924" description="Putative acetyltransferase SAV1054">
    <location>
        <begin position="1"/>
        <end position="144"/>
    </location>
</feature>
<feature type="domain" description="N-acetyltransferase" evidence="3">
    <location>
        <begin position="1"/>
        <end position="141"/>
    </location>
</feature>
<feature type="binding site" evidence="2">
    <location>
        <begin position="71"/>
        <end position="73"/>
    </location>
    <ligand>
        <name>CoA</name>
        <dbReference type="ChEBI" id="CHEBI:57287"/>
    </ligand>
</feature>
<feature type="binding site" evidence="2">
    <location>
        <position position="79"/>
    </location>
    <ligand>
        <name>CoA</name>
        <dbReference type="ChEBI" id="CHEBI:57287"/>
    </ligand>
</feature>
<feature type="binding site" evidence="2">
    <location>
        <begin position="112"/>
        <end position="114"/>
    </location>
    <ligand>
        <name>CoA</name>
        <dbReference type="ChEBI" id="CHEBI:57287"/>
    </ligand>
</feature>
<gene>
    <name type="ordered locus">SAV1054</name>
</gene>
<evidence type="ECO:0000250" key="1">
    <source>
        <dbReference type="UniProtKB" id="Q5HH30"/>
    </source>
</evidence>
<evidence type="ECO:0000250" key="2">
    <source>
        <dbReference type="UniProtKB" id="Q9I0Q8"/>
    </source>
</evidence>
<evidence type="ECO:0000255" key="3">
    <source>
        <dbReference type="PROSITE-ProRule" id="PRU00532"/>
    </source>
</evidence>
<evidence type="ECO:0000305" key="4"/>
<keyword id="KW-0012">Acyltransferase</keyword>
<keyword id="KW-0808">Transferase</keyword>